<gene>
    <name type="primary">spcs2</name>
    <name type="synonym">spc2</name>
    <name type="ORF">DDB_G0270510</name>
</gene>
<proteinExistence type="inferred from homology"/>
<sequence>MSTTTTTTTTEKPIQVTLYDSNTIKQTLDDSIVKYVTSALSYTQNQKLNYTKVLFGLIGCTLAAIAQFYPIPFPKNKPVLILCVALYVVISLILYYINIFIQKDYILQASKSNDEIKVATVLQKYDPNYQVKIENAKNSSINVPFSKSIDLYFDTKGTFLESNFHNDLSVQFKKFAKLNVKDK</sequence>
<comment type="function">
    <text evidence="1 2">Component of the signal peptidase complex (SPC) which catalyzes the cleavage of N-terminal signal sequences from nascent proteins as they are translocated into the lumen of the endoplasmic reticulum (By similarity). Enhances the enzymatic activity of SPC and facilitates the interactions between different components of the translocation site (By similarity).</text>
</comment>
<comment type="subunit">
    <text evidence="2">Component of the signal peptidase complex (SPC) composed of a catalytic subunit sec11 and three accessory subunits spcs1, spcs2 and spcs3. The complex induces a local thinning of the ER membrane which is used to measure the length of the signal peptide (SP) h-region of protein substrates. This ensures the selectivity of the complex towards h-regions shorter than 18-20 amino acids.</text>
</comment>
<comment type="subcellular location">
    <subcellularLocation>
        <location evidence="3">Endoplasmic reticulum membrane</location>
        <topology evidence="3">Multi-pass membrane protein</topology>
    </subcellularLocation>
</comment>
<comment type="similarity">
    <text evidence="5">Belongs to the SPCS2 family.</text>
</comment>
<feature type="chain" id="PRO_0000329962" description="Signal peptidase complex subunit 2">
    <location>
        <begin position="1"/>
        <end position="183"/>
    </location>
</feature>
<feature type="topological domain" description="Cytoplasmic" evidence="3">
    <location>
        <begin position="1"/>
        <end position="52"/>
    </location>
</feature>
<feature type="transmembrane region" description="Helical" evidence="4">
    <location>
        <begin position="53"/>
        <end position="73"/>
    </location>
</feature>
<feature type="topological domain" description="Lumenal" evidence="3">
    <location>
        <begin position="74"/>
        <end position="80"/>
    </location>
</feature>
<feature type="transmembrane region" description="Helical" evidence="4">
    <location>
        <begin position="81"/>
        <end position="101"/>
    </location>
</feature>
<feature type="topological domain" description="Cytoplasmic" evidence="3">
    <location>
        <begin position="102"/>
        <end position="183"/>
    </location>
</feature>
<keyword id="KW-0256">Endoplasmic reticulum</keyword>
<keyword id="KW-0472">Membrane</keyword>
<keyword id="KW-1185">Reference proteome</keyword>
<keyword id="KW-0812">Transmembrane</keyword>
<keyword id="KW-1133">Transmembrane helix</keyword>
<protein>
    <recommendedName>
        <fullName>Signal peptidase complex subunit 2</fullName>
    </recommendedName>
</protein>
<accession>Q55E35</accession>
<evidence type="ECO:0000250" key="1">
    <source>
        <dbReference type="UniProtKB" id="Q04969"/>
    </source>
</evidence>
<evidence type="ECO:0000250" key="2">
    <source>
        <dbReference type="UniProtKB" id="Q15005"/>
    </source>
</evidence>
<evidence type="ECO:0000250" key="3">
    <source>
        <dbReference type="UniProtKB" id="Q28250"/>
    </source>
</evidence>
<evidence type="ECO:0000255" key="4"/>
<evidence type="ECO:0000305" key="5"/>
<reference key="1">
    <citation type="journal article" date="2005" name="Nature">
        <title>The genome of the social amoeba Dictyostelium discoideum.</title>
        <authorList>
            <person name="Eichinger L."/>
            <person name="Pachebat J.A."/>
            <person name="Gloeckner G."/>
            <person name="Rajandream M.A."/>
            <person name="Sucgang R."/>
            <person name="Berriman M."/>
            <person name="Song J."/>
            <person name="Olsen R."/>
            <person name="Szafranski K."/>
            <person name="Xu Q."/>
            <person name="Tunggal B."/>
            <person name="Kummerfeld S."/>
            <person name="Madera M."/>
            <person name="Konfortov B.A."/>
            <person name="Rivero F."/>
            <person name="Bankier A.T."/>
            <person name="Lehmann R."/>
            <person name="Hamlin N."/>
            <person name="Davies R."/>
            <person name="Gaudet P."/>
            <person name="Fey P."/>
            <person name="Pilcher K."/>
            <person name="Chen G."/>
            <person name="Saunders D."/>
            <person name="Sodergren E.J."/>
            <person name="Davis P."/>
            <person name="Kerhornou A."/>
            <person name="Nie X."/>
            <person name="Hall N."/>
            <person name="Anjard C."/>
            <person name="Hemphill L."/>
            <person name="Bason N."/>
            <person name="Farbrother P."/>
            <person name="Desany B."/>
            <person name="Just E."/>
            <person name="Morio T."/>
            <person name="Rost R."/>
            <person name="Churcher C.M."/>
            <person name="Cooper J."/>
            <person name="Haydock S."/>
            <person name="van Driessche N."/>
            <person name="Cronin A."/>
            <person name="Goodhead I."/>
            <person name="Muzny D.M."/>
            <person name="Mourier T."/>
            <person name="Pain A."/>
            <person name="Lu M."/>
            <person name="Harper D."/>
            <person name="Lindsay R."/>
            <person name="Hauser H."/>
            <person name="James K.D."/>
            <person name="Quiles M."/>
            <person name="Madan Babu M."/>
            <person name="Saito T."/>
            <person name="Buchrieser C."/>
            <person name="Wardroper A."/>
            <person name="Felder M."/>
            <person name="Thangavelu M."/>
            <person name="Johnson D."/>
            <person name="Knights A."/>
            <person name="Loulseged H."/>
            <person name="Mungall K.L."/>
            <person name="Oliver K."/>
            <person name="Price C."/>
            <person name="Quail M.A."/>
            <person name="Urushihara H."/>
            <person name="Hernandez J."/>
            <person name="Rabbinowitsch E."/>
            <person name="Steffen D."/>
            <person name="Sanders M."/>
            <person name="Ma J."/>
            <person name="Kohara Y."/>
            <person name="Sharp S."/>
            <person name="Simmonds M.N."/>
            <person name="Spiegler S."/>
            <person name="Tivey A."/>
            <person name="Sugano S."/>
            <person name="White B."/>
            <person name="Walker D."/>
            <person name="Woodward J.R."/>
            <person name="Winckler T."/>
            <person name="Tanaka Y."/>
            <person name="Shaulsky G."/>
            <person name="Schleicher M."/>
            <person name="Weinstock G.M."/>
            <person name="Rosenthal A."/>
            <person name="Cox E.C."/>
            <person name="Chisholm R.L."/>
            <person name="Gibbs R.A."/>
            <person name="Loomis W.F."/>
            <person name="Platzer M."/>
            <person name="Kay R.R."/>
            <person name="Williams J.G."/>
            <person name="Dear P.H."/>
            <person name="Noegel A.A."/>
            <person name="Barrell B.G."/>
            <person name="Kuspa A."/>
        </authorList>
    </citation>
    <scope>NUCLEOTIDE SEQUENCE [LARGE SCALE GENOMIC DNA]</scope>
    <source>
        <strain>AX4</strain>
    </source>
</reference>
<dbReference type="EMBL" id="AAFI02000005">
    <property type="protein sequence ID" value="EAL72605.2"/>
    <property type="molecule type" value="Genomic_DNA"/>
</dbReference>
<dbReference type="RefSeq" id="XP_645946.2">
    <property type="nucleotide sequence ID" value="XM_640854.2"/>
</dbReference>
<dbReference type="SMR" id="Q55E35"/>
<dbReference type="FunCoup" id="Q55E35">
    <property type="interactions" value="487"/>
</dbReference>
<dbReference type="STRING" id="44689.Q55E35"/>
<dbReference type="PaxDb" id="44689-DDB0237785"/>
<dbReference type="EnsemblProtists" id="EAL72605">
    <property type="protein sequence ID" value="EAL72605"/>
    <property type="gene ID" value="DDB_G0270510"/>
</dbReference>
<dbReference type="GeneID" id="8616890"/>
<dbReference type="KEGG" id="ddi:DDB_G0270510"/>
<dbReference type="dictyBase" id="DDB_G0270510">
    <property type="gene designation" value="spc2"/>
</dbReference>
<dbReference type="VEuPathDB" id="AmoebaDB:DDB_G0270510"/>
<dbReference type="eggNOG" id="KOG4072">
    <property type="taxonomic scope" value="Eukaryota"/>
</dbReference>
<dbReference type="HOGENOM" id="CLU_100048_0_0_1"/>
<dbReference type="InParanoid" id="Q55E35"/>
<dbReference type="OMA" id="INKWDGT"/>
<dbReference type="PhylomeDB" id="Q55E35"/>
<dbReference type="PRO" id="PR:Q55E35"/>
<dbReference type="Proteomes" id="UP000002195">
    <property type="component" value="Chromosome 1"/>
</dbReference>
<dbReference type="GO" id="GO:0005787">
    <property type="term" value="C:signal peptidase complex"/>
    <property type="evidence" value="ECO:0000318"/>
    <property type="project" value="GO_Central"/>
</dbReference>
<dbReference type="GO" id="GO:0045047">
    <property type="term" value="P:protein targeting to ER"/>
    <property type="evidence" value="ECO:0000318"/>
    <property type="project" value="GO_Central"/>
</dbReference>
<dbReference type="GO" id="GO:0006465">
    <property type="term" value="P:signal peptide processing"/>
    <property type="evidence" value="ECO:0000318"/>
    <property type="project" value="GO_Central"/>
</dbReference>
<dbReference type="InterPro" id="IPR009582">
    <property type="entry name" value="Spc2/SPCS2"/>
</dbReference>
<dbReference type="PANTHER" id="PTHR13085">
    <property type="entry name" value="MICROSOMAL SIGNAL PEPTIDASE 25 KDA SUBUNIT"/>
    <property type="match status" value="1"/>
</dbReference>
<dbReference type="PANTHER" id="PTHR13085:SF0">
    <property type="entry name" value="SIGNAL PEPTIDASE COMPLEX SUBUNIT 2"/>
    <property type="match status" value="1"/>
</dbReference>
<dbReference type="Pfam" id="PF06703">
    <property type="entry name" value="SPC25"/>
    <property type="match status" value="1"/>
</dbReference>
<name>SPCS2_DICDI</name>
<organism>
    <name type="scientific">Dictyostelium discoideum</name>
    <name type="common">Social amoeba</name>
    <dbReference type="NCBI Taxonomy" id="44689"/>
    <lineage>
        <taxon>Eukaryota</taxon>
        <taxon>Amoebozoa</taxon>
        <taxon>Evosea</taxon>
        <taxon>Eumycetozoa</taxon>
        <taxon>Dictyostelia</taxon>
        <taxon>Dictyosteliales</taxon>
        <taxon>Dictyosteliaceae</taxon>
        <taxon>Dictyostelium</taxon>
    </lineage>
</organism>